<keyword id="KW-0378">Hydrolase</keyword>
<keyword id="KW-0479">Metal-binding</keyword>
<keyword id="KW-0862">Zinc</keyword>
<accession>A7FIE8</accession>
<dbReference type="EC" id="3.1.3.-" evidence="1"/>
<dbReference type="EMBL" id="CP000720">
    <property type="protein sequence ID" value="ABS48078.1"/>
    <property type="molecule type" value="Genomic_DNA"/>
</dbReference>
<dbReference type="RefSeq" id="WP_002211221.1">
    <property type="nucleotide sequence ID" value="NC_009708.1"/>
</dbReference>
<dbReference type="SMR" id="A7FIE8"/>
<dbReference type="KEGG" id="ypi:YpsIP31758_2053"/>
<dbReference type="HOGENOM" id="CLU_061999_0_1_6"/>
<dbReference type="Proteomes" id="UP000002412">
    <property type="component" value="Chromosome"/>
</dbReference>
<dbReference type="GO" id="GO:0005829">
    <property type="term" value="C:cytosol"/>
    <property type="evidence" value="ECO:0007669"/>
    <property type="project" value="TreeGrafter"/>
</dbReference>
<dbReference type="GO" id="GO:0016791">
    <property type="term" value="F:phosphatase activity"/>
    <property type="evidence" value="ECO:0007669"/>
    <property type="project" value="UniProtKB-UniRule"/>
</dbReference>
<dbReference type="GO" id="GO:0008270">
    <property type="term" value="F:zinc ion binding"/>
    <property type="evidence" value="ECO:0007669"/>
    <property type="project" value="UniProtKB-UniRule"/>
</dbReference>
<dbReference type="GO" id="GO:0071978">
    <property type="term" value="P:bacterial-type flagellum-dependent swarming motility"/>
    <property type="evidence" value="ECO:0007669"/>
    <property type="project" value="TreeGrafter"/>
</dbReference>
<dbReference type="CDD" id="cd07437">
    <property type="entry name" value="PHP_HisPPase_Ycdx_like"/>
    <property type="match status" value="1"/>
</dbReference>
<dbReference type="FunFam" id="3.20.20.140:FF:000008">
    <property type="entry name" value="Probable phosphatase YcdX"/>
    <property type="match status" value="1"/>
</dbReference>
<dbReference type="Gene3D" id="3.20.20.140">
    <property type="entry name" value="Metal-dependent hydrolases"/>
    <property type="match status" value="1"/>
</dbReference>
<dbReference type="HAMAP" id="MF_01561">
    <property type="entry name" value="YcdX_phosphat"/>
    <property type="match status" value="1"/>
</dbReference>
<dbReference type="InterPro" id="IPR023710">
    <property type="entry name" value="Phosphatase_YcdX_put"/>
</dbReference>
<dbReference type="InterPro" id="IPR004013">
    <property type="entry name" value="PHP_dom"/>
</dbReference>
<dbReference type="InterPro" id="IPR050243">
    <property type="entry name" value="PHP_phosphatase"/>
</dbReference>
<dbReference type="InterPro" id="IPR003141">
    <property type="entry name" value="Pol/His_phosphatase_N"/>
</dbReference>
<dbReference type="InterPro" id="IPR016195">
    <property type="entry name" value="Pol/histidinol_Pase-like"/>
</dbReference>
<dbReference type="NCBIfam" id="NF006702">
    <property type="entry name" value="PRK09248.1"/>
    <property type="match status" value="1"/>
</dbReference>
<dbReference type="PANTHER" id="PTHR36928">
    <property type="entry name" value="PHOSPHATASE YCDX-RELATED"/>
    <property type="match status" value="1"/>
</dbReference>
<dbReference type="PANTHER" id="PTHR36928:SF1">
    <property type="entry name" value="PHOSPHATASE YCDX-RELATED"/>
    <property type="match status" value="1"/>
</dbReference>
<dbReference type="Pfam" id="PF02811">
    <property type="entry name" value="PHP"/>
    <property type="match status" value="1"/>
</dbReference>
<dbReference type="SMART" id="SM00481">
    <property type="entry name" value="POLIIIAc"/>
    <property type="match status" value="1"/>
</dbReference>
<dbReference type="SUPFAM" id="SSF89550">
    <property type="entry name" value="PHP domain-like"/>
    <property type="match status" value="1"/>
</dbReference>
<sequence>MYPVDLHMHTVASTHAYSTLHDYIAEAKLKNIKLFAITDHGPDMADAPHYWHFMNMRVWPRLVDGVGILRGIEANIKNLDGDIDCTGPMLDAVDLLIAGFHEPVFPPQDKAANTQAMIATMAQGNVHIISHPGNPKYPVDIPAIAQAAAKYNVALELNNSSFAHSRKGSEANCRAIAAAVRDAGGWLALGSDSHIAYALGIFEHCERIIAEVNFPQERILNVSPRRLLDYLEQRGRPAIPELAEL</sequence>
<protein>
    <recommendedName>
        <fullName evidence="1">Probable phosphatase YpsIP31758_2053</fullName>
        <ecNumber evidence="1">3.1.3.-</ecNumber>
    </recommendedName>
</protein>
<reference key="1">
    <citation type="journal article" date="2007" name="PLoS Genet.">
        <title>The complete genome sequence of Yersinia pseudotuberculosis IP31758, the causative agent of Far East scarlet-like fever.</title>
        <authorList>
            <person name="Eppinger M."/>
            <person name="Rosovitz M.J."/>
            <person name="Fricke W.F."/>
            <person name="Rasko D.A."/>
            <person name="Kokorina G."/>
            <person name="Fayolle C."/>
            <person name="Lindler L.E."/>
            <person name="Carniel E."/>
            <person name="Ravel J."/>
        </authorList>
    </citation>
    <scope>NUCLEOTIDE SEQUENCE [LARGE SCALE GENOMIC DNA]</scope>
    <source>
        <strain>IP 31758</strain>
    </source>
</reference>
<name>Y2053_YERP3</name>
<organism>
    <name type="scientific">Yersinia pseudotuberculosis serotype O:1b (strain IP 31758)</name>
    <dbReference type="NCBI Taxonomy" id="349747"/>
    <lineage>
        <taxon>Bacteria</taxon>
        <taxon>Pseudomonadati</taxon>
        <taxon>Pseudomonadota</taxon>
        <taxon>Gammaproteobacteria</taxon>
        <taxon>Enterobacterales</taxon>
        <taxon>Yersiniaceae</taxon>
        <taxon>Yersinia</taxon>
    </lineage>
</organism>
<comment type="cofactor">
    <cofactor evidence="1">
        <name>Zn(2+)</name>
        <dbReference type="ChEBI" id="CHEBI:29105"/>
    </cofactor>
    <text evidence="1">Binds 3 Zn(2+) ions per subunit.</text>
</comment>
<comment type="subunit">
    <text evidence="1">Homotrimer.</text>
</comment>
<comment type="similarity">
    <text evidence="1">Belongs to the PHP family.</text>
</comment>
<evidence type="ECO:0000255" key="1">
    <source>
        <dbReference type="HAMAP-Rule" id="MF_01561"/>
    </source>
</evidence>
<gene>
    <name type="ordered locus">YpsIP31758_2053</name>
</gene>
<proteinExistence type="inferred from homology"/>
<feature type="chain" id="PRO_1000069036" description="Probable phosphatase YpsIP31758_2053">
    <location>
        <begin position="1"/>
        <end position="245"/>
    </location>
</feature>
<feature type="binding site" evidence="1">
    <location>
        <position position="7"/>
    </location>
    <ligand>
        <name>Zn(2+)</name>
        <dbReference type="ChEBI" id="CHEBI:29105"/>
        <label>1</label>
    </ligand>
</feature>
<feature type="binding site" evidence="1">
    <location>
        <position position="9"/>
    </location>
    <ligand>
        <name>Zn(2+)</name>
        <dbReference type="ChEBI" id="CHEBI:29105"/>
        <label>1</label>
    </ligand>
</feature>
<feature type="binding site" evidence="1">
    <location>
        <position position="15"/>
    </location>
    <ligand>
        <name>Zn(2+)</name>
        <dbReference type="ChEBI" id="CHEBI:29105"/>
        <label>2</label>
    </ligand>
</feature>
<feature type="binding site" evidence="1">
    <location>
        <position position="40"/>
    </location>
    <ligand>
        <name>Zn(2+)</name>
        <dbReference type="ChEBI" id="CHEBI:29105"/>
        <label>2</label>
    </ligand>
</feature>
<feature type="binding site" evidence="1">
    <location>
        <position position="73"/>
    </location>
    <ligand>
        <name>Zn(2+)</name>
        <dbReference type="ChEBI" id="CHEBI:29105"/>
        <label>1</label>
    </ligand>
</feature>
<feature type="binding site" evidence="1">
    <location>
        <position position="73"/>
    </location>
    <ligand>
        <name>Zn(2+)</name>
        <dbReference type="ChEBI" id="CHEBI:29105"/>
        <label>3</label>
    </ligand>
</feature>
<feature type="binding site" evidence="1">
    <location>
        <position position="101"/>
    </location>
    <ligand>
        <name>Zn(2+)</name>
        <dbReference type="ChEBI" id="CHEBI:29105"/>
        <label>3</label>
    </ligand>
</feature>
<feature type="binding site" evidence="1">
    <location>
        <position position="131"/>
    </location>
    <ligand>
        <name>Zn(2+)</name>
        <dbReference type="ChEBI" id="CHEBI:29105"/>
        <label>3</label>
    </ligand>
</feature>
<feature type="binding site" evidence="1">
    <location>
        <position position="192"/>
    </location>
    <ligand>
        <name>Zn(2+)</name>
        <dbReference type="ChEBI" id="CHEBI:29105"/>
        <label>1</label>
    </ligand>
</feature>
<feature type="binding site" evidence="1">
    <location>
        <position position="194"/>
    </location>
    <ligand>
        <name>Zn(2+)</name>
        <dbReference type="ChEBI" id="CHEBI:29105"/>
        <label>2</label>
    </ligand>
</feature>